<organism>
    <name type="scientific">Schizosaccharomyces pombe (strain 972 / ATCC 24843)</name>
    <name type="common">Fission yeast</name>
    <dbReference type="NCBI Taxonomy" id="284812"/>
    <lineage>
        <taxon>Eukaryota</taxon>
        <taxon>Fungi</taxon>
        <taxon>Dikarya</taxon>
        <taxon>Ascomycota</taxon>
        <taxon>Taphrinomycotina</taxon>
        <taxon>Schizosaccharomycetes</taxon>
        <taxon>Schizosaccharomycetales</taxon>
        <taxon>Schizosaccharomycetaceae</taxon>
        <taxon>Schizosaccharomyces</taxon>
    </lineage>
</organism>
<proteinExistence type="evidence at protein level"/>
<name>MAK16_SCHPO</name>
<evidence type="ECO:0000255" key="1"/>
<evidence type="ECO:0000256" key="2">
    <source>
        <dbReference type="SAM" id="MobiDB-lite"/>
    </source>
</evidence>
<evidence type="ECO:0000269" key="3">
    <source>
    </source>
</evidence>
<evidence type="ECO:0000305" key="4"/>
<evidence type="ECO:0007829" key="5">
    <source>
        <dbReference type="PDB" id="8EUY"/>
    </source>
</evidence>
<evidence type="ECO:0007829" key="6">
    <source>
        <dbReference type="PDB" id="8EV3"/>
    </source>
</evidence>
<reference key="1">
    <citation type="journal article" date="2002" name="Nature">
        <title>The genome sequence of Schizosaccharomyces pombe.</title>
        <authorList>
            <person name="Wood V."/>
            <person name="Gwilliam R."/>
            <person name="Rajandream M.A."/>
            <person name="Lyne M.H."/>
            <person name="Lyne R."/>
            <person name="Stewart A."/>
            <person name="Sgouros J.G."/>
            <person name="Peat N."/>
            <person name="Hayles J."/>
            <person name="Baker S.G."/>
            <person name="Basham D."/>
            <person name="Bowman S."/>
            <person name="Brooks K."/>
            <person name="Brown D."/>
            <person name="Brown S."/>
            <person name="Chillingworth T."/>
            <person name="Churcher C.M."/>
            <person name="Collins M."/>
            <person name="Connor R."/>
            <person name="Cronin A."/>
            <person name="Davis P."/>
            <person name="Feltwell T."/>
            <person name="Fraser A."/>
            <person name="Gentles S."/>
            <person name="Goble A."/>
            <person name="Hamlin N."/>
            <person name="Harris D.E."/>
            <person name="Hidalgo J."/>
            <person name="Hodgson G."/>
            <person name="Holroyd S."/>
            <person name="Hornsby T."/>
            <person name="Howarth S."/>
            <person name="Huckle E.J."/>
            <person name="Hunt S."/>
            <person name="Jagels K."/>
            <person name="James K.D."/>
            <person name="Jones L."/>
            <person name="Jones M."/>
            <person name="Leather S."/>
            <person name="McDonald S."/>
            <person name="McLean J."/>
            <person name="Mooney P."/>
            <person name="Moule S."/>
            <person name="Mungall K.L."/>
            <person name="Murphy L.D."/>
            <person name="Niblett D."/>
            <person name="Odell C."/>
            <person name="Oliver K."/>
            <person name="O'Neil S."/>
            <person name="Pearson D."/>
            <person name="Quail M.A."/>
            <person name="Rabbinowitsch E."/>
            <person name="Rutherford K.M."/>
            <person name="Rutter S."/>
            <person name="Saunders D."/>
            <person name="Seeger K."/>
            <person name="Sharp S."/>
            <person name="Skelton J."/>
            <person name="Simmonds M.N."/>
            <person name="Squares R."/>
            <person name="Squares S."/>
            <person name="Stevens K."/>
            <person name="Taylor K."/>
            <person name="Taylor R.G."/>
            <person name="Tivey A."/>
            <person name="Walsh S.V."/>
            <person name="Warren T."/>
            <person name="Whitehead S."/>
            <person name="Woodward J.R."/>
            <person name="Volckaert G."/>
            <person name="Aert R."/>
            <person name="Robben J."/>
            <person name="Grymonprez B."/>
            <person name="Weltjens I."/>
            <person name="Vanstreels E."/>
            <person name="Rieger M."/>
            <person name="Schaefer M."/>
            <person name="Mueller-Auer S."/>
            <person name="Gabel C."/>
            <person name="Fuchs M."/>
            <person name="Duesterhoeft A."/>
            <person name="Fritzc C."/>
            <person name="Holzer E."/>
            <person name="Moestl D."/>
            <person name="Hilbert H."/>
            <person name="Borzym K."/>
            <person name="Langer I."/>
            <person name="Beck A."/>
            <person name="Lehrach H."/>
            <person name="Reinhardt R."/>
            <person name="Pohl T.M."/>
            <person name="Eger P."/>
            <person name="Zimmermann W."/>
            <person name="Wedler H."/>
            <person name="Wambutt R."/>
            <person name="Purnelle B."/>
            <person name="Goffeau A."/>
            <person name="Cadieu E."/>
            <person name="Dreano S."/>
            <person name="Gloux S."/>
            <person name="Lelaure V."/>
            <person name="Mottier S."/>
            <person name="Galibert F."/>
            <person name="Aves S.J."/>
            <person name="Xiang Z."/>
            <person name="Hunt C."/>
            <person name="Moore K."/>
            <person name="Hurst S.M."/>
            <person name="Lucas M."/>
            <person name="Rochet M."/>
            <person name="Gaillardin C."/>
            <person name="Tallada V.A."/>
            <person name="Garzon A."/>
            <person name="Thode G."/>
            <person name="Daga R.R."/>
            <person name="Cruzado L."/>
            <person name="Jimenez J."/>
            <person name="Sanchez M."/>
            <person name="del Rey F."/>
            <person name="Benito J."/>
            <person name="Dominguez A."/>
            <person name="Revuelta J.L."/>
            <person name="Moreno S."/>
            <person name="Armstrong J."/>
            <person name="Forsburg S.L."/>
            <person name="Cerutti L."/>
            <person name="Lowe T."/>
            <person name="McCombie W.R."/>
            <person name="Paulsen I."/>
            <person name="Potashkin J."/>
            <person name="Shpakovski G.V."/>
            <person name="Ussery D."/>
            <person name="Barrell B.G."/>
            <person name="Nurse P."/>
        </authorList>
    </citation>
    <scope>NUCLEOTIDE SEQUENCE [LARGE SCALE GENOMIC DNA]</scope>
    <source>
        <strain>972 / ATCC 24843</strain>
    </source>
</reference>
<reference key="2">
    <citation type="journal article" date="2006" name="Nat. Biotechnol.">
        <title>ORFeome cloning and global analysis of protein localization in the fission yeast Schizosaccharomyces pombe.</title>
        <authorList>
            <person name="Matsuyama A."/>
            <person name="Arai R."/>
            <person name="Yashiroda Y."/>
            <person name="Shirai A."/>
            <person name="Kamata A."/>
            <person name="Sekido S."/>
            <person name="Kobayashi Y."/>
            <person name="Hashimoto A."/>
            <person name="Hamamoto M."/>
            <person name="Hiraoka Y."/>
            <person name="Horinouchi S."/>
            <person name="Yoshida M."/>
        </authorList>
    </citation>
    <scope>SUBCELLULAR LOCATION [LARGE SCALE ANALYSIS]</scope>
</reference>
<protein>
    <recommendedName>
        <fullName>Protein mak16</fullName>
    </recommendedName>
</protein>
<sequence>MQQDEVIWQVVGHEFCSYRIKGEAQNFCRNEYNVTGLCNRQSCPLANSRYATVREDNGKLYLYMKTIERAHFPSKLWQRIKLSKNYAKALEQIDQQLLYWPGRQIHRCKQRLTRLTQYLLKARRLALKHQPALIPIKPKQAHREASRERKALIAAKLEKNIEKELVKRLKSGVYGDQPLNVNEEIWNKVLAAREGLIDEGEEEEEREEAELEFVSDDEDEEEISDLEDWLGSDQSMETSESEEEESSESESDEDEDEDNKGKIRKRKTDDAKKSRKKRAPHIHIEYEQERENEKIPAVQHSW</sequence>
<gene>
    <name type="primary">mak16</name>
    <name type="ORF">SPAC222.06</name>
</gene>
<comment type="subcellular location">
    <subcellularLocation>
        <location evidence="3">Cytoplasm</location>
    </subcellularLocation>
    <subcellularLocation>
        <location evidence="3">Nucleus</location>
    </subcellularLocation>
</comment>
<comment type="similarity">
    <text evidence="4">Belongs to the MAK16 family.</text>
</comment>
<accession>Q9UTE6</accession>
<dbReference type="EMBL" id="CU329670">
    <property type="protein sequence ID" value="CAB60698.1"/>
    <property type="molecule type" value="Genomic_DNA"/>
</dbReference>
<dbReference type="PIR" id="T50147">
    <property type="entry name" value="T50147"/>
</dbReference>
<dbReference type="RefSeq" id="NP_593145.1">
    <property type="nucleotide sequence ID" value="NM_001018542.2"/>
</dbReference>
<dbReference type="PDB" id="8ESQ">
    <property type="method" value="EM"/>
    <property type="resolution" value="2.80 A"/>
    <property type="chains" value="3=1-302"/>
</dbReference>
<dbReference type="PDB" id="8ETC">
    <property type="method" value="EM"/>
    <property type="resolution" value="3.10 A"/>
    <property type="chains" value="3=1-302"/>
</dbReference>
<dbReference type="PDB" id="8ETG">
    <property type="method" value="EM"/>
    <property type="resolution" value="3.40 A"/>
    <property type="chains" value="3=1-302"/>
</dbReference>
<dbReference type="PDB" id="8ETH">
    <property type="method" value="EM"/>
    <property type="resolution" value="3.80 A"/>
    <property type="chains" value="3=1-302"/>
</dbReference>
<dbReference type="PDB" id="8ETI">
    <property type="method" value="EM"/>
    <property type="resolution" value="3.70 A"/>
    <property type="chains" value="3=1-302"/>
</dbReference>
<dbReference type="PDB" id="8ETJ">
    <property type="method" value="EM"/>
    <property type="resolution" value="3.20 A"/>
    <property type="chains" value="3=1-302"/>
</dbReference>
<dbReference type="PDB" id="8EUG">
    <property type="method" value="EM"/>
    <property type="resolution" value="2.80 A"/>
    <property type="chains" value="3=1-302"/>
</dbReference>
<dbReference type="PDB" id="8EUI">
    <property type="method" value="EM"/>
    <property type="resolution" value="3.10 A"/>
    <property type="chains" value="3=1-302"/>
</dbReference>
<dbReference type="PDB" id="8EUP">
    <property type="method" value="EM"/>
    <property type="resolution" value="3.10 A"/>
    <property type="chains" value="3=1-302"/>
</dbReference>
<dbReference type="PDB" id="8EUY">
    <property type="method" value="EM"/>
    <property type="resolution" value="3.00 A"/>
    <property type="chains" value="3=1-302"/>
</dbReference>
<dbReference type="PDB" id="8EV3">
    <property type="method" value="EM"/>
    <property type="resolution" value="3.00 A"/>
    <property type="chains" value="3=1-302"/>
</dbReference>
<dbReference type="PDBsum" id="8ESQ"/>
<dbReference type="PDBsum" id="8ETC"/>
<dbReference type="PDBsum" id="8ETG"/>
<dbReference type="PDBsum" id="8ETH"/>
<dbReference type="PDBsum" id="8ETI"/>
<dbReference type="PDBsum" id="8ETJ"/>
<dbReference type="PDBsum" id="8EUG"/>
<dbReference type="PDBsum" id="8EUI"/>
<dbReference type="PDBsum" id="8EUP"/>
<dbReference type="PDBsum" id="8EUY"/>
<dbReference type="PDBsum" id="8EV3"/>
<dbReference type="SMR" id="Q9UTE6"/>
<dbReference type="BioGRID" id="278431">
    <property type="interactions" value="7"/>
</dbReference>
<dbReference type="FunCoup" id="Q9UTE6">
    <property type="interactions" value="664"/>
</dbReference>
<dbReference type="STRING" id="284812.Q9UTE6"/>
<dbReference type="iPTMnet" id="Q9UTE6"/>
<dbReference type="PaxDb" id="4896-SPAC222.06.1"/>
<dbReference type="EnsemblFungi" id="SPAC222.06.1">
    <property type="protein sequence ID" value="SPAC222.06.1:pep"/>
    <property type="gene ID" value="SPAC222.06"/>
</dbReference>
<dbReference type="GeneID" id="2541944"/>
<dbReference type="KEGG" id="spo:2541944"/>
<dbReference type="PomBase" id="SPAC222.06">
    <property type="gene designation" value="mak16"/>
</dbReference>
<dbReference type="VEuPathDB" id="FungiDB:SPAC222.06"/>
<dbReference type="eggNOG" id="KOG3064">
    <property type="taxonomic scope" value="Eukaryota"/>
</dbReference>
<dbReference type="HOGENOM" id="CLU_050888_0_1_1"/>
<dbReference type="InParanoid" id="Q9UTE6"/>
<dbReference type="OMA" id="DKGQNFC"/>
<dbReference type="PhylomeDB" id="Q9UTE6"/>
<dbReference type="PRO" id="PR:Q9UTE6"/>
<dbReference type="Proteomes" id="UP000002485">
    <property type="component" value="Chromosome I"/>
</dbReference>
<dbReference type="GO" id="GO:0005829">
    <property type="term" value="C:cytosol"/>
    <property type="evidence" value="ECO:0007005"/>
    <property type="project" value="PomBase"/>
</dbReference>
<dbReference type="GO" id="GO:0005730">
    <property type="term" value="C:nucleolus"/>
    <property type="evidence" value="ECO:0000318"/>
    <property type="project" value="GO_Central"/>
</dbReference>
<dbReference type="GO" id="GO:0005634">
    <property type="term" value="C:nucleus"/>
    <property type="evidence" value="ECO:0007005"/>
    <property type="project" value="PomBase"/>
</dbReference>
<dbReference type="GO" id="GO:0030684">
    <property type="term" value="C:preribosome"/>
    <property type="evidence" value="ECO:0000314"/>
    <property type="project" value="PomBase"/>
</dbReference>
<dbReference type="GO" id="GO:0030687">
    <property type="term" value="C:preribosome, large subunit precursor"/>
    <property type="evidence" value="ECO:0000318"/>
    <property type="project" value="GO_Central"/>
</dbReference>
<dbReference type="GO" id="GO:1902626">
    <property type="term" value="P:assembly of large subunit precursor of preribosome"/>
    <property type="evidence" value="ECO:0000269"/>
    <property type="project" value="PomBase"/>
</dbReference>
<dbReference type="GO" id="GO:0000460">
    <property type="term" value="P:maturation of 5.8S rRNA"/>
    <property type="evidence" value="ECO:0000318"/>
    <property type="project" value="GO_Central"/>
</dbReference>
<dbReference type="GO" id="GO:0000470">
    <property type="term" value="P:maturation of LSU-rRNA"/>
    <property type="evidence" value="ECO:0000318"/>
    <property type="project" value="GO_Central"/>
</dbReference>
<dbReference type="FunFam" id="3.30.390.110:FF:000001">
    <property type="entry name" value="Protein MAK16 homolog"/>
    <property type="match status" value="1"/>
</dbReference>
<dbReference type="Gene3D" id="3.30.390.110">
    <property type="match status" value="1"/>
</dbReference>
<dbReference type="InterPro" id="IPR006958">
    <property type="entry name" value="Mak16"/>
</dbReference>
<dbReference type="InterPro" id="IPR029004">
    <property type="entry name" value="Ribosomal_eL28/Mak16"/>
</dbReference>
<dbReference type="PANTHER" id="PTHR23405">
    <property type="entry name" value="MAINTENANCE OF KILLER 16 MAK16 PROTEIN-RELATED"/>
    <property type="match status" value="1"/>
</dbReference>
<dbReference type="PANTHER" id="PTHR23405:SF4">
    <property type="entry name" value="PROTEIN MAK16 HOMOLOG"/>
    <property type="match status" value="1"/>
</dbReference>
<dbReference type="Pfam" id="PF04874">
    <property type="entry name" value="Mak16"/>
    <property type="match status" value="1"/>
</dbReference>
<dbReference type="Pfam" id="PF01778">
    <property type="entry name" value="Ribosomal_L28e"/>
    <property type="match status" value="1"/>
</dbReference>
<dbReference type="PIRSF" id="PIRSF003352">
    <property type="entry name" value="MAK16"/>
    <property type="match status" value="1"/>
</dbReference>
<feature type="chain" id="PRO_0000339417" description="Protein mak16">
    <location>
        <begin position="1"/>
        <end position="302"/>
    </location>
</feature>
<feature type="region of interest" description="Disordered" evidence="2">
    <location>
        <begin position="198"/>
        <end position="302"/>
    </location>
</feature>
<feature type="short sequence motif" description="Nuclear localization signal" evidence="1">
    <location>
        <begin position="138"/>
        <end position="143"/>
    </location>
</feature>
<feature type="short sequence motif" description="Nuclear localization signal" evidence="1">
    <location>
        <begin position="274"/>
        <end position="282"/>
    </location>
</feature>
<feature type="compositionally biased region" description="Acidic residues" evidence="2">
    <location>
        <begin position="198"/>
        <end position="230"/>
    </location>
</feature>
<feature type="compositionally biased region" description="Acidic residues" evidence="2">
    <location>
        <begin position="239"/>
        <end position="258"/>
    </location>
</feature>
<feature type="compositionally biased region" description="Basic and acidic residues" evidence="2">
    <location>
        <begin position="282"/>
        <end position="294"/>
    </location>
</feature>
<feature type="helix" evidence="5">
    <location>
        <begin position="4"/>
        <end position="11"/>
    </location>
</feature>
<feature type="turn" evidence="5">
    <location>
        <begin position="12"/>
        <end position="14"/>
    </location>
</feature>
<feature type="strand" evidence="6">
    <location>
        <begin position="19"/>
        <end position="21"/>
    </location>
</feature>
<feature type="strand" evidence="6">
    <location>
        <begin position="26"/>
        <end position="28"/>
    </location>
</feature>
<feature type="strand" evidence="5">
    <location>
        <begin position="34"/>
        <end position="37"/>
    </location>
</feature>
<feature type="turn" evidence="5">
    <location>
        <begin position="40"/>
        <end position="42"/>
    </location>
</feature>
<feature type="turn" evidence="5">
    <location>
        <begin position="44"/>
        <end position="46"/>
    </location>
</feature>
<feature type="strand" evidence="5">
    <location>
        <begin position="48"/>
        <end position="56"/>
    </location>
</feature>
<feature type="strand" evidence="5">
    <location>
        <begin position="59"/>
        <end position="65"/>
    </location>
</feature>
<feature type="helix" evidence="5">
    <location>
        <begin position="67"/>
        <end position="69"/>
    </location>
</feature>
<feature type="helix" evidence="5">
    <location>
        <begin position="73"/>
        <end position="75"/>
    </location>
</feature>
<feature type="strand" evidence="5">
    <location>
        <begin position="76"/>
        <end position="81"/>
    </location>
</feature>
<feature type="helix" evidence="5">
    <location>
        <begin position="86"/>
        <end position="96"/>
    </location>
</feature>
<feature type="turn" evidence="5">
    <location>
        <begin position="97"/>
        <end position="99"/>
    </location>
</feature>
<feature type="helix" evidence="5">
    <location>
        <begin position="102"/>
        <end position="127"/>
    </location>
</feature>
<feature type="strand" evidence="5">
    <location>
        <begin position="132"/>
        <end position="135"/>
    </location>
</feature>
<feature type="helix" evidence="5">
    <location>
        <begin position="138"/>
        <end position="155"/>
    </location>
</feature>
<feature type="helix" evidence="5">
    <location>
        <begin position="157"/>
        <end position="170"/>
    </location>
</feature>
<feature type="strand" evidence="6">
    <location>
        <begin position="174"/>
        <end position="177"/>
    </location>
</feature>
<feature type="strand" evidence="5">
    <location>
        <begin position="179"/>
        <end position="181"/>
    </location>
</feature>
<feature type="helix" evidence="5">
    <location>
        <begin position="183"/>
        <end position="193"/>
    </location>
</feature>
<keyword id="KW-0002">3D-structure</keyword>
<keyword id="KW-0131">Cell cycle</keyword>
<keyword id="KW-0963">Cytoplasm</keyword>
<keyword id="KW-0539">Nucleus</keyword>
<keyword id="KW-1185">Reference proteome</keyword>